<gene>
    <name type="primary">nikR</name>
    <name type="ordered locus">Z4873</name>
    <name type="ordered locus">ECs4348</name>
</gene>
<feature type="chain" id="PRO_0000139275" description="Nickel-responsive regulator">
    <location>
        <begin position="1"/>
        <end position="133"/>
    </location>
</feature>
<feature type="binding site" evidence="1">
    <location>
        <position position="76"/>
    </location>
    <ligand>
        <name>Ni(2+)</name>
        <dbReference type="ChEBI" id="CHEBI:49786"/>
    </ligand>
</feature>
<feature type="binding site" evidence="1">
    <location>
        <position position="87"/>
    </location>
    <ligand>
        <name>Ni(2+)</name>
        <dbReference type="ChEBI" id="CHEBI:49786"/>
    </ligand>
</feature>
<feature type="binding site" evidence="1">
    <location>
        <position position="89"/>
    </location>
    <ligand>
        <name>Ni(2+)</name>
        <dbReference type="ChEBI" id="CHEBI:49786"/>
    </ligand>
</feature>
<feature type="binding site" evidence="1">
    <location>
        <position position="95"/>
    </location>
    <ligand>
        <name>Ni(2+)</name>
        <dbReference type="ChEBI" id="CHEBI:49786"/>
    </ligand>
</feature>
<comment type="function">
    <text evidence="1">Transcriptional repressor of the nikABCDE operon. Is active in the presence of excessive concentrations of intracellular nickel (By similarity).</text>
</comment>
<comment type="cofactor">
    <cofactor evidence="1">
        <name>Ni(2+)</name>
        <dbReference type="ChEBI" id="CHEBI:49786"/>
    </cofactor>
    <text evidence="1">Binds 1 nickel ion per subunit.</text>
</comment>
<comment type="subunit">
    <text evidence="1">Homotetramer.</text>
</comment>
<comment type="similarity">
    <text evidence="2">Belongs to the transcriptional regulatory CopG/NikR family.</text>
</comment>
<name>NIKR_ECO57</name>
<sequence length="133" mass="15094">MQRVTITLDDDLLETLDSLSQRRGYNNRSEAIRDILRSALAQEATQQHGTQGFAVLSYVYEHEKRDLASRIVSTQHHHHDLSVATLHVHINHDDCLEIAVLKGDMGDVQHFADDVIAQRGVRHGHLQCLPKED</sequence>
<keyword id="KW-0238">DNA-binding</keyword>
<keyword id="KW-0479">Metal-binding</keyword>
<keyword id="KW-0533">Nickel</keyword>
<keyword id="KW-1185">Reference proteome</keyword>
<keyword id="KW-0678">Repressor</keyword>
<keyword id="KW-0804">Transcription</keyword>
<keyword id="KW-0805">Transcription regulation</keyword>
<evidence type="ECO:0000250" key="1"/>
<evidence type="ECO:0000305" key="2"/>
<accession>P0A6Z8</accession>
<accession>P28910</accession>
<accession>Q47559</accession>
<reference key="1">
    <citation type="journal article" date="2001" name="Nature">
        <title>Genome sequence of enterohaemorrhagic Escherichia coli O157:H7.</title>
        <authorList>
            <person name="Perna N.T."/>
            <person name="Plunkett G. III"/>
            <person name="Burland V."/>
            <person name="Mau B."/>
            <person name="Glasner J.D."/>
            <person name="Rose D.J."/>
            <person name="Mayhew G.F."/>
            <person name="Evans P.S."/>
            <person name="Gregor J."/>
            <person name="Kirkpatrick H.A."/>
            <person name="Posfai G."/>
            <person name="Hackett J."/>
            <person name="Klink S."/>
            <person name="Boutin A."/>
            <person name="Shao Y."/>
            <person name="Miller L."/>
            <person name="Grotbeck E.J."/>
            <person name="Davis N.W."/>
            <person name="Lim A."/>
            <person name="Dimalanta E.T."/>
            <person name="Potamousis K."/>
            <person name="Apodaca J."/>
            <person name="Anantharaman T.S."/>
            <person name="Lin J."/>
            <person name="Yen G."/>
            <person name="Schwartz D.C."/>
            <person name="Welch R.A."/>
            <person name="Blattner F.R."/>
        </authorList>
    </citation>
    <scope>NUCLEOTIDE SEQUENCE [LARGE SCALE GENOMIC DNA]</scope>
    <source>
        <strain>O157:H7 / EDL933 / ATCC 700927 / EHEC</strain>
    </source>
</reference>
<reference key="2">
    <citation type="journal article" date="2001" name="DNA Res.">
        <title>Complete genome sequence of enterohemorrhagic Escherichia coli O157:H7 and genomic comparison with a laboratory strain K-12.</title>
        <authorList>
            <person name="Hayashi T."/>
            <person name="Makino K."/>
            <person name="Ohnishi M."/>
            <person name="Kurokawa K."/>
            <person name="Ishii K."/>
            <person name="Yokoyama K."/>
            <person name="Han C.-G."/>
            <person name="Ohtsubo E."/>
            <person name="Nakayama K."/>
            <person name="Murata T."/>
            <person name="Tanaka M."/>
            <person name="Tobe T."/>
            <person name="Iida T."/>
            <person name="Takami H."/>
            <person name="Honda T."/>
            <person name="Sasakawa C."/>
            <person name="Ogasawara N."/>
            <person name="Yasunaga T."/>
            <person name="Kuhara S."/>
            <person name="Shiba T."/>
            <person name="Hattori M."/>
            <person name="Shinagawa H."/>
        </authorList>
    </citation>
    <scope>NUCLEOTIDE SEQUENCE [LARGE SCALE GENOMIC DNA]</scope>
    <source>
        <strain>O157:H7 / Sakai / RIMD 0509952 / EHEC</strain>
    </source>
</reference>
<dbReference type="EMBL" id="AE005174">
    <property type="protein sequence ID" value="AAG58608.1"/>
    <property type="molecule type" value="Genomic_DNA"/>
</dbReference>
<dbReference type="EMBL" id="BA000007">
    <property type="protein sequence ID" value="BAB37771.1"/>
    <property type="molecule type" value="Genomic_DNA"/>
</dbReference>
<dbReference type="PIR" id="D86018">
    <property type="entry name" value="D86018"/>
</dbReference>
<dbReference type="PIR" id="D91172">
    <property type="entry name" value="D91172"/>
</dbReference>
<dbReference type="RefSeq" id="NP_312375.1">
    <property type="nucleotide sequence ID" value="NC_002695.1"/>
</dbReference>
<dbReference type="RefSeq" id="WP_001190062.1">
    <property type="nucleotide sequence ID" value="NZ_VOAI01000004.1"/>
</dbReference>
<dbReference type="SMR" id="P0A6Z8"/>
<dbReference type="STRING" id="155864.Z4873"/>
<dbReference type="GeneID" id="915801"/>
<dbReference type="GeneID" id="93778510"/>
<dbReference type="KEGG" id="ece:Z4873"/>
<dbReference type="KEGG" id="ecs:ECs_4348"/>
<dbReference type="PATRIC" id="fig|386585.9.peg.4541"/>
<dbReference type="eggNOG" id="COG0864">
    <property type="taxonomic scope" value="Bacteria"/>
</dbReference>
<dbReference type="HOGENOM" id="CLU_113319_1_4_6"/>
<dbReference type="OMA" id="HDNCLEV"/>
<dbReference type="Proteomes" id="UP000000558">
    <property type="component" value="Chromosome"/>
</dbReference>
<dbReference type="Proteomes" id="UP000002519">
    <property type="component" value="Chromosome"/>
</dbReference>
<dbReference type="GO" id="GO:0003700">
    <property type="term" value="F:DNA-binding transcription factor activity"/>
    <property type="evidence" value="ECO:0007669"/>
    <property type="project" value="UniProtKB-UniRule"/>
</dbReference>
<dbReference type="GO" id="GO:0016151">
    <property type="term" value="F:nickel cation binding"/>
    <property type="evidence" value="ECO:0007669"/>
    <property type="project" value="UniProtKB-UniRule"/>
</dbReference>
<dbReference type="GO" id="GO:0043565">
    <property type="term" value="F:sequence-specific DNA binding"/>
    <property type="evidence" value="ECO:0007669"/>
    <property type="project" value="UniProtKB-ARBA"/>
</dbReference>
<dbReference type="GO" id="GO:0010045">
    <property type="term" value="P:response to nickel cation"/>
    <property type="evidence" value="ECO:0007669"/>
    <property type="project" value="InterPro"/>
</dbReference>
<dbReference type="CDD" id="cd22231">
    <property type="entry name" value="RHH_NikR_HicB-like"/>
    <property type="match status" value="1"/>
</dbReference>
<dbReference type="FunFam" id="1.10.1220.10:FF:000001">
    <property type="entry name" value="Nickel-responsive regulator"/>
    <property type="match status" value="1"/>
</dbReference>
<dbReference type="FunFam" id="3.30.70.1150:FF:000002">
    <property type="entry name" value="Nickel-responsive regulator"/>
    <property type="match status" value="1"/>
</dbReference>
<dbReference type="Gene3D" id="3.30.70.1150">
    <property type="entry name" value="ACT-like. Chain A, domain 2"/>
    <property type="match status" value="1"/>
</dbReference>
<dbReference type="Gene3D" id="1.10.1220.10">
    <property type="entry name" value="Met repressor-like"/>
    <property type="match status" value="1"/>
</dbReference>
<dbReference type="HAMAP" id="MF_00476">
    <property type="entry name" value="NikR"/>
    <property type="match status" value="1"/>
</dbReference>
<dbReference type="InterPro" id="IPR027271">
    <property type="entry name" value="Acetolactate_synth/TF_NikR_C"/>
</dbReference>
<dbReference type="InterPro" id="IPR045865">
    <property type="entry name" value="ACT-like_dom_sf"/>
</dbReference>
<dbReference type="InterPro" id="IPR013321">
    <property type="entry name" value="Arc_rbn_hlx_hlx"/>
</dbReference>
<dbReference type="InterPro" id="IPR002145">
    <property type="entry name" value="CopG"/>
</dbReference>
<dbReference type="InterPro" id="IPR050192">
    <property type="entry name" value="CopG/NikR_regulator"/>
</dbReference>
<dbReference type="InterPro" id="IPR022988">
    <property type="entry name" value="Ni_resp_reg_NikR"/>
</dbReference>
<dbReference type="InterPro" id="IPR014160">
    <property type="entry name" value="Nickel_NikR_proteobac"/>
</dbReference>
<dbReference type="InterPro" id="IPR010985">
    <property type="entry name" value="Ribbon_hlx_hlx"/>
</dbReference>
<dbReference type="InterPro" id="IPR014864">
    <property type="entry name" value="TF_NikR_Ni-bd_C"/>
</dbReference>
<dbReference type="NCBIfam" id="TIGR02793">
    <property type="entry name" value="nikR"/>
    <property type="match status" value="1"/>
</dbReference>
<dbReference type="NCBIfam" id="NF002815">
    <property type="entry name" value="PRK02967.1"/>
    <property type="match status" value="1"/>
</dbReference>
<dbReference type="NCBIfam" id="NF003381">
    <property type="entry name" value="PRK04460.1"/>
    <property type="match status" value="1"/>
</dbReference>
<dbReference type="PANTHER" id="PTHR34719">
    <property type="entry name" value="NICKEL-RESPONSIVE REGULATOR"/>
    <property type="match status" value="1"/>
</dbReference>
<dbReference type="PANTHER" id="PTHR34719:SF2">
    <property type="entry name" value="NICKEL-RESPONSIVE REGULATOR"/>
    <property type="match status" value="1"/>
</dbReference>
<dbReference type="Pfam" id="PF08753">
    <property type="entry name" value="NikR_C"/>
    <property type="match status" value="1"/>
</dbReference>
<dbReference type="Pfam" id="PF01402">
    <property type="entry name" value="RHH_1"/>
    <property type="match status" value="1"/>
</dbReference>
<dbReference type="SUPFAM" id="SSF55021">
    <property type="entry name" value="ACT-like"/>
    <property type="match status" value="1"/>
</dbReference>
<dbReference type="SUPFAM" id="SSF47598">
    <property type="entry name" value="Ribbon-helix-helix"/>
    <property type="match status" value="1"/>
</dbReference>
<proteinExistence type="inferred from homology"/>
<protein>
    <recommendedName>
        <fullName>Nickel-responsive regulator</fullName>
    </recommendedName>
</protein>
<organism>
    <name type="scientific">Escherichia coli O157:H7</name>
    <dbReference type="NCBI Taxonomy" id="83334"/>
    <lineage>
        <taxon>Bacteria</taxon>
        <taxon>Pseudomonadati</taxon>
        <taxon>Pseudomonadota</taxon>
        <taxon>Gammaproteobacteria</taxon>
        <taxon>Enterobacterales</taxon>
        <taxon>Enterobacteriaceae</taxon>
        <taxon>Escherichia</taxon>
    </lineage>
</organism>